<feature type="chain" id="PRO_1000186807" description="Pyridoxine/pyridoxal/pyridoxamine kinase">
    <location>
        <begin position="1"/>
        <end position="283"/>
    </location>
</feature>
<feature type="binding site" evidence="1">
    <location>
        <position position="23"/>
    </location>
    <ligand>
        <name>substrate</name>
    </ligand>
</feature>
<feature type="binding site" evidence="1">
    <location>
        <position position="59"/>
    </location>
    <ligand>
        <name>substrate</name>
    </ligand>
</feature>
<feature type="binding site" evidence="1">
    <location>
        <position position="125"/>
    </location>
    <ligand>
        <name>ATP</name>
        <dbReference type="ChEBI" id="CHEBI:30616"/>
    </ligand>
</feature>
<feature type="binding site" evidence="1">
    <location>
        <position position="136"/>
    </location>
    <ligand>
        <name>Mg(2+)</name>
        <dbReference type="ChEBI" id="CHEBI:18420"/>
    </ligand>
</feature>
<feature type="binding site" evidence="1">
    <location>
        <position position="157"/>
    </location>
    <ligand>
        <name>ATP</name>
        <dbReference type="ChEBI" id="CHEBI:30616"/>
    </ligand>
</feature>
<feature type="binding site" evidence="1">
    <location>
        <position position="162"/>
    </location>
    <ligand>
        <name>ATP</name>
        <dbReference type="ChEBI" id="CHEBI:30616"/>
    </ligand>
</feature>
<feature type="binding site" evidence="1">
    <location>
        <position position="162"/>
    </location>
    <ligand>
        <name>Mg(2+)</name>
        <dbReference type="ChEBI" id="CHEBI:18420"/>
    </ligand>
</feature>
<feature type="binding site" evidence="1">
    <location>
        <position position="195"/>
    </location>
    <ligand>
        <name>ATP</name>
        <dbReference type="ChEBI" id="CHEBI:30616"/>
    </ligand>
</feature>
<feature type="binding site" evidence="1">
    <location>
        <begin position="221"/>
        <end position="224"/>
    </location>
    <ligand>
        <name>ATP</name>
        <dbReference type="ChEBI" id="CHEBI:30616"/>
    </ligand>
</feature>
<feature type="binding site" evidence="1">
    <location>
        <position position="231"/>
    </location>
    <ligand>
        <name>ATP</name>
        <dbReference type="ChEBI" id="CHEBI:30616"/>
    </ligand>
</feature>
<feature type="binding site" evidence="1">
    <location>
        <position position="233"/>
    </location>
    <ligand>
        <name>substrate</name>
    </ligand>
</feature>
<reference key="1">
    <citation type="journal article" date="2008" name="DNA Res.">
        <title>Complete genome sequence and comparative analysis of the wild-type commensal Escherichia coli strain SE11 isolated from a healthy adult.</title>
        <authorList>
            <person name="Oshima K."/>
            <person name="Toh H."/>
            <person name="Ogura Y."/>
            <person name="Sasamoto H."/>
            <person name="Morita H."/>
            <person name="Park S.-H."/>
            <person name="Ooka T."/>
            <person name="Iyoda S."/>
            <person name="Taylor T.D."/>
            <person name="Hayashi T."/>
            <person name="Itoh K."/>
            <person name="Hattori M."/>
        </authorList>
    </citation>
    <scope>NUCLEOTIDE SEQUENCE [LARGE SCALE GENOMIC DNA]</scope>
    <source>
        <strain>SE11</strain>
    </source>
</reference>
<name>PDXK_ECOSE</name>
<evidence type="ECO:0000255" key="1">
    <source>
        <dbReference type="HAMAP-Rule" id="MF_01638"/>
    </source>
</evidence>
<accession>B6I4Z5</accession>
<comment type="function">
    <text evidence="1">B6-vitamer kinase involved in the salvage pathway of pyridoxal 5'-phosphate (PLP). Catalyzes the phosphorylation of pyridoxine (PN), pyridoxal (PL), and pyridoxamine (PM), forming their respective 5'-phosphorylated esters, i.e. PNP, PLP and PMP.</text>
</comment>
<comment type="catalytic activity">
    <reaction evidence="1">
        <text>pyridoxal + ATP = pyridoxal 5'-phosphate + ADP + H(+)</text>
        <dbReference type="Rhea" id="RHEA:10224"/>
        <dbReference type="ChEBI" id="CHEBI:15378"/>
        <dbReference type="ChEBI" id="CHEBI:17310"/>
        <dbReference type="ChEBI" id="CHEBI:30616"/>
        <dbReference type="ChEBI" id="CHEBI:456216"/>
        <dbReference type="ChEBI" id="CHEBI:597326"/>
        <dbReference type="EC" id="2.7.1.35"/>
    </reaction>
</comment>
<comment type="catalytic activity">
    <reaction evidence="1">
        <text>pyridoxine + ATP = pyridoxine 5'-phosphate + ADP + H(+)</text>
        <dbReference type="Rhea" id="RHEA:25108"/>
        <dbReference type="ChEBI" id="CHEBI:15378"/>
        <dbReference type="ChEBI" id="CHEBI:16709"/>
        <dbReference type="ChEBI" id="CHEBI:30616"/>
        <dbReference type="ChEBI" id="CHEBI:58589"/>
        <dbReference type="ChEBI" id="CHEBI:456216"/>
        <dbReference type="EC" id="2.7.1.35"/>
    </reaction>
</comment>
<comment type="catalytic activity">
    <reaction evidence="1">
        <text>pyridoxamine + ATP = pyridoxamine 5'-phosphate + ADP + H(+)</text>
        <dbReference type="Rhea" id="RHEA:25104"/>
        <dbReference type="ChEBI" id="CHEBI:15378"/>
        <dbReference type="ChEBI" id="CHEBI:30616"/>
        <dbReference type="ChEBI" id="CHEBI:57761"/>
        <dbReference type="ChEBI" id="CHEBI:58451"/>
        <dbReference type="ChEBI" id="CHEBI:456216"/>
        <dbReference type="EC" id="2.7.1.35"/>
    </reaction>
</comment>
<comment type="cofactor">
    <cofactor evidence="1">
        <name>Mg(2+)</name>
        <dbReference type="ChEBI" id="CHEBI:18420"/>
    </cofactor>
</comment>
<comment type="pathway">
    <text evidence="1">Cofactor metabolism; pyridoxal 5'-phosphate salvage; pyridoxal 5'-phosphate from pyridoxal: step 1/1.</text>
</comment>
<comment type="pathway">
    <text evidence="1">Cofactor metabolism; pyridoxal 5'-phosphate salvage; pyridoxine 5'-phosphate from pyridoxine: step 1/1.</text>
</comment>
<comment type="pathway">
    <text evidence="1">Cofactor metabolism; pyridoxal 5'-phosphate salvage; pyridoxamine 5'-phosphate from pyridoxamine: step 1/1.</text>
</comment>
<comment type="subunit">
    <text evidence="1">Homodimer.</text>
</comment>
<comment type="similarity">
    <text evidence="1">Belongs to the pyridoxine kinase family. PdxK subfamily.</text>
</comment>
<keyword id="KW-0067">ATP-binding</keyword>
<keyword id="KW-0418">Kinase</keyword>
<keyword id="KW-0460">Magnesium</keyword>
<keyword id="KW-0479">Metal-binding</keyword>
<keyword id="KW-0547">Nucleotide-binding</keyword>
<keyword id="KW-0808">Transferase</keyword>
<keyword id="KW-0862">Zinc</keyword>
<sequence>MSSLLLFNDKSRALQADIVAVQSQVVYGSVGNSIAVPAIKQNGLNVFAVPTVLLSNTPHYDTFYGGAIPDEWFSGYLRALQERDALRQLRAVTTGYMGTASQIKILAEWLTALRKDHPDLLIMVDPVIGDIDSGIYVKPDLPEAYRQYLLPLAQGITPNIFELEILTGKNCRDLDSAIAAAKSLLSDTLKWVVITSASGNEENQEMQVVVVSADSVNVISHSRVKTDLKGTGDLFCAQLISGLLKGKALNDAVHRAGLRVLEVMRYTQQHESDELILPPLAEA</sequence>
<protein>
    <recommendedName>
        <fullName evidence="1">Pyridoxine/pyridoxal/pyridoxamine kinase</fullName>
        <shortName evidence="1">PN/PL/PM kinase</shortName>
        <ecNumber evidence="1">2.7.1.35</ecNumber>
    </recommendedName>
    <alternativeName>
        <fullName evidence="1">B6-vitamer kinase</fullName>
    </alternativeName>
</protein>
<proteinExistence type="inferred from homology"/>
<organism>
    <name type="scientific">Escherichia coli (strain SE11)</name>
    <dbReference type="NCBI Taxonomy" id="409438"/>
    <lineage>
        <taxon>Bacteria</taxon>
        <taxon>Pseudomonadati</taxon>
        <taxon>Pseudomonadota</taxon>
        <taxon>Gammaproteobacteria</taxon>
        <taxon>Enterobacterales</taxon>
        <taxon>Enterobacteriaceae</taxon>
        <taxon>Escherichia</taxon>
    </lineage>
</organism>
<dbReference type="EC" id="2.7.1.35" evidence="1"/>
<dbReference type="EMBL" id="AP009240">
    <property type="protein sequence ID" value="BAG78233.1"/>
    <property type="molecule type" value="Genomic_DNA"/>
</dbReference>
<dbReference type="RefSeq" id="WP_000096660.1">
    <property type="nucleotide sequence ID" value="NC_011415.1"/>
</dbReference>
<dbReference type="SMR" id="B6I4Z5"/>
<dbReference type="GeneID" id="93774712"/>
<dbReference type="KEGG" id="ecy:ECSE_2709"/>
<dbReference type="HOGENOM" id="CLU_046496_3_1_6"/>
<dbReference type="UniPathway" id="UPA01068">
    <property type="reaction ID" value="UER00298"/>
</dbReference>
<dbReference type="UniPathway" id="UPA01068">
    <property type="reaction ID" value="UER00299"/>
</dbReference>
<dbReference type="UniPathway" id="UPA01068">
    <property type="reaction ID" value="UER00300"/>
</dbReference>
<dbReference type="Proteomes" id="UP000008199">
    <property type="component" value="Chromosome"/>
</dbReference>
<dbReference type="GO" id="GO:0005829">
    <property type="term" value="C:cytosol"/>
    <property type="evidence" value="ECO:0007669"/>
    <property type="project" value="TreeGrafter"/>
</dbReference>
<dbReference type="GO" id="GO:0005524">
    <property type="term" value="F:ATP binding"/>
    <property type="evidence" value="ECO:0007669"/>
    <property type="project" value="UniProtKB-UniRule"/>
</dbReference>
<dbReference type="GO" id="GO:0008902">
    <property type="term" value="F:hydroxymethylpyrimidine kinase activity"/>
    <property type="evidence" value="ECO:0007669"/>
    <property type="project" value="TreeGrafter"/>
</dbReference>
<dbReference type="GO" id="GO:0000287">
    <property type="term" value="F:magnesium ion binding"/>
    <property type="evidence" value="ECO:0007669"/>
    <property type="project" value="UniProtKB-UniRule"/>
</dbReference>
<dbReference type="GO" id="GO:0008478">
    <property type="term" value="F:pyridoxal kinase activity"/>
    <property type="evidence" value="ECO:0007669"/>
    <property type="project" value="UniProtKB-UniRule"/>
</dbReference>
<dbReference type="GO" id="GO:0008270">
    <property type="term" value="F:zinc ion binding"/>
    <property type="evidence" value="ECO:0007669"/>
    <property type="project" value="UniProtKB-UniRule"/>
</dbReference>
<dbReference type="GO" id="GO:0009443">
    <property type="term" value="P:pyridoxal 5'-phosphate salvage"/>
    <property type="evidence" value="ECO:0007669"/>
    <property type="project" value="UniProtKB-UniRule"/>
</dbReference>
<dbReference type="CDD" id="cd01173">
    <property type="entry name" value="pyridoxal_pyridoxamine_kinase"/>
    <property type="match status" value="1"/>
</dbReference>
<dbReference type="FunFam" id="3.40.1190.20:FF:000009">
    <property type="entry name" value="Pyridoxine/pyridoxal/pyridoxamine kinase"/>
    <property type="match status" value="1"/>
</dbReference>
<dbReference type="Gene3D" id="3.40.1190.20">
    <property type="match status" value="1"/>
</dbReference>
<dbReference type="HAMAP" id="MF_01638">
    <property type="entry name" value="PdxK"/>
    <property type="match status" value="1"/>
</dbReference>
<dbReference type="InterPro" id="IPR023479">
    <property type="entry name" value="PdxK"/>
</dbReference>
<dbReference type="InterPro" id="IPR013749">
    <property type="entry name" value="PM/HMP-P_kinase-1"/>
</dbReference>
<dbReference type="InterPro" id="IPR004625">
    <property type="entry name" value="PyrdxlKinase"/>
</dbReference>
<dbReference type="InterPro" id="IPR029056">
    <property type="entry name" value="Ribokinase-like"/>
</dbReference>
<dbReference type="NCBIfam" id="NF006034">
    <property type="entry name" value="PRK08176.1"/>
    <property type="match status" value="1"/>
</dbReference>
<dbReference type="NCBIfam" id="TIGR00687">
    <property type="entry name" value="pyridox_kin"/>
    <property type="match status" value="1"/>
</dbReference>
<dbReference type="PANTHER" id="PTHR10534">
    <property type="entry name" value="PYRIDOXAL KINASE"/>
    <property type="match status" value="1"/>
</dbReference>
<dbReference type="PANTHER" id="PTHR10534:SF15">
    <property type="entry name" value="PYRIDOXINE_PYRIDOXAL_PYRIDOXAMINE KINASE"/>
    <property type="match status" value="1"/>
</dbReference>
<dbReference type="Pfam" id="PF08543">
    <property type="entry name" value="Phos_pyr_kin"/>
    <property type="match status" value="1"/>
</dbReference>
<dbReference type="SUPFAM" id="SSF53613">
    <property type="entry name" value="Ribokinase-like"/>
    <property type="match status" value="1"/>
</dbReference>
<gene>
    <name evidence="1" type="primary">pdxK</name>
    <name type="ordered locus">ECSE_2709</name>
</gene>